<organism>
    <name type="scientific">Corynebacterium glutamicum (strain ATCC 13032 / DSM 20300 / JCM 1318 / BCRC 11384 / CCUG 27702 / LMG 3730 / NBRC 12168 / NCIMB 10025 / NRRL B-2784 / 534)</name>
    <dbReference type="NCBI Taxonomy" id="196627"/>
    <lineage>
        <taxon>Bacteria</taxon>
        <taxon>Bacillati</taxon>
        <taxon>Actinomycetota</taxon>
        <taxon>Actinomycetes</taxon>
        <taxon>Mycobacteriales</taxon>
        <taxon>Corynebacteriaceae</taxon>
        <taxon>Corynebacterium</taxon>
    </lineage>
</organism>
<sequence>MIITAIDTNIYDQPEFVEGRDVIGVRFEDLVLDKRIQRVALPGGEELGLRLNHGHPILREGDVLKADDKTVFVVEIIPTDVLVITPSDIHQMGFVAHSLGNRHLPAQFSKPGELTEKAAMIVQYDHTVVSFLDEHGIEYQRTELVPPIPFRHSGHTH</sequence>
<feature type="chain" id="PRO_0000067631" description="Urease accessory protein UreE">
    <location>
        <begin position="1"/>
        <end position="157"/>
    </location>
</feature>
<feature type="sequence conflict" description="In Ref. 1; BAA88555." evidence="3" ref="1">
    <original>P</original>
    <variation>S</variation>
    <location>
        <position position="42"/>
    </location>
</feature>
<feature type="sequence conflict" description="In Ref. 1; BAA88555." evidence="3" ref="1">
    <original>NHGHPI</original>
    <variation>ITGTPS</variation>
    <location>
        <begin position="52"/>
        <end position="57"/>
    </location>
</feature>
<feature type="sequence conflict" description="In Ref. 1; BAA88555." evidence="3" ref="1">
    <original>K</original>
    <variation>R</variation>
    <location>
        <position position="69"/>
    </location>
</feature>
<feature type="sequence conflict" description="In Ref. 1." evidence="3" ref="1">
    <original>DEHGIEYQRTELVPPIPFRHSGHTH</original>
    <variation>G</variation>
    <location>
        <begin position="133"/>
        <end position="157"/>
    </location>
</feature>
<gene>
    <name evidence="1" type="primary">ureE</name>
    <name type="ordered locus">Cgl0087</name>
    <name type="ordered locus">cg0116</name>
</gene>
<proteinExistence type="evidence at transcript level"/>
<evidence type="ECO:0000255" key="1">
    <source>
        <dbReference type="HAMAP-Rule" id="MF_00822"/>
    </source>
</evidence>
<evidence type="ECO:0000269" key="2">
    <source>
    </source>
</evidence>
<evidence type="ECO:0000305" key="3"/>
<comment type="function">
    <text evidence="1">Involved in urease metallocenter assembly. Binds nickel. Probably functions as a nickel donor during metallocenter assembly.</text>
</comment>
<comment type="subcellular location">
    <subcellularLocation>
        <location evidence="1">Cytoplasm</location>
    </subcellularLocation>
</comment>
<comment type="induction">
    <text evidence="2">By urea and nitrogen starvation.</text>
</comment>
<comment type="similarity">
    <text evidence="1">Belongs to the UreE family.</text>
</comment>
<reference key="1">
    <citation type="journal article" date="2000" name="DNA Seq.">
        <title>Structure of the urease operon of Corynebacterium glutamicum.</title>
        <authorList>
            <person name="Puskas L.G."/>
            <person name="Inui M."/>
            <person name="Yukawa H."/>
        </authorList>
    </citation>
    <scope>NUCLEOTIDE SEQUENCE [GENOMIC DNA]</scope>
    <scope>INDUCTION</scope>
    <source>
        <strain>ATCC 13869 / DSMZ 1412 / NCIMB 9567</strain>
    </source>
</reference>
<reference key="2">
    <citation type="journal article" date="2000" name="FEMS Microbiol. Lett.">
        <title>Urease of Corynebacterium glutamicum: organization of corresponding genes and investigation of activity.</title>
        <authorList>
            <person name="Nolden L."/>
            <person name="Beckers G."/>
            <person name="Moeckel B."/>
            <person name="Pfefferle W."/>
            <person name="Nampoothiri K.M."/>
            <person name="Kraemer R."/>
            <person name="Burkovski A."/>
        </authorList>
    </citation>
    <scope>NUCLEOTIDE SEQUENCE [GENOMIC DNA]</scope>
    <scope>OPERON STRUCTURE</scope>
    <source>
        <strain>ATCC 13032 / DSM 20300 / JCM 1318 / BCRC 11384 / CCUG 27702 / LMG 3730 / NBRC 12168 / NCIMB 10025 / NRRL B-2784 / 534</strain>
    </source>
</reference>
<reference key="3">
    <citation type="journal article" date="2003" name="Appl. Microbiol. Biotechnol.">
        <title>The Corynebacterium glutamicum genome: features and impacts on biotechnological processes.</title>
        <authorList>
            <person name="Ikeda M."/>
            <person name="Nakagawa S."/>
        </authorList>
    </citation>
    <scope>NUCLEOTIDE SEQUENCE [LARGE SCALE GENOMIC DNA]</scope>
    <source>
        <strain>ATCC 13032 / DSM 20300 / JCM 1318 / BCRC 11384 / CCUG 27702 / LMG 3730 / NBRC 12168 / NCIMB 10025 / NRRL B-2784 / 534</strain>
    </source>
</reference>
<reference key="4">
    <citation type="journal article" date="2003" name="J. Biotechnol.">
        <title>The complete Corynebacterium glutamicum ATCC 13032 genome sequence and its impact on the production of L-aspartate-derived amino acids and vitamins.</title>
        <authorList>
            <person name="Kalinowski J."/>
            <person name="Bathe B."/>
            <person name="Bartels D."/>
            <person name="Bischoff N."/>
            <person name="Bott M."/>
            <person name="Burkovski A."/>
            <person name="Dusch N."/>
            <person name="Eggeling L."/>
            <person name="Eikmanns B.J."/>
            <person name="Gaigalat L."/>
            <person name="Goesmann A."/>
            <person name="Hartmann M."/>
            <person name="Huthmacher K."/>
            <person name="Kraemer R."/>
            <person name="Linke B."/>
            <person name="McHardy A.C."/>
            <person name="Meyer F."/>
            <person name="Moeckel B."/>
            <person name="Pfefferle W."/>
            <person name="Puehler A."/>
            <person name="Rey D.A."/>
            <person name="Rueckert C."/>
            <person name="Rupp O."/>
            <person name="Sahm H."/>
            <person name="Wendisch V.F."/>
            <person name="Wiegraebe I."/>
            <person name="Tauch A."/>
        </authorList>
    </citation>
    <scope>NUCLEOTIDE SEQUENCE [LARGE SCALE GENOMIC DNA]</scope>
    <source>
        <strain>ATCC 13032 / DSM 20300 / JCM 1318 / BCRC 11384 / CCUG 27702 / LMG 3730 / NBRC 12168 / NCIMB 10025 / NRRL B-2784 / 534</strain>
    </source>
</reference>
<name>UREE_CORGL</name>
<accession>Q9RHM3</accession>
<accession>Q9L419</accession>
<dbReference type="EMBL" id="AB029154">
    <property type="protein sequence ID" value="BAA88555.1"/>
    <property type="molecule type" value="Genomic_DNA"/>
</dbReference>
<dbReference type="EMBL" id="AJ251883">
    <property type="protein sequence ID" value="CAB81938.1"/>
    <property type="molecule type" value="Genomic_DNA"/>
</dbReference>
<dbReference type="EMBL" id="BA000036">
    <property type="protein sequence ID" value="BAB97480.1"/>
    <property type="molecule type" value="Genomic_DNA"/>
</dbReference>
<dbReference type="EMBL" id="BX927148">
    <property type="protein sequence ID" value="CAF18655.1"/>
    <property type="molecule type" value="Genomic_DNA"/>
</dbReference>
<dbReference type="RefSeq" id="NP_599339.1">
    <property type="nucleotide sequence ID" value="NC_003450.3"/>
</dbReference>
<dbReference type="RefSeq" id="WP_011013379.1">
    <property type="nucleotide sequence ID" value="NC_006958.1"/>
</dbReference>
<dbReference type="SMR" id="Q9RHM3"/>
<dbReference type="STRING" id="196627.cg0116"/>
<dbReference type="GeneID" id="1021224"/>
<dbReference type="KEGG" id="cgb:cg0116"/>
<dbReference type="KEGG" id="cgl:Cgl0087"/>
<dbReference type="PATRIC" id="fig|196627.13.peg.88"/>
<dbReference type="eggNOG" id="COG2371">
    <property type="taxonomic scope" value="Bacteria"/>
</dbReference>
<dbReference type="HOGENOM" id="CLU_093757_3_1_11"/>
<dbReference type="OrthoDB" id="9810882at2"/>
<dbReference type="BioCyc" id="CORYNE:G18NG-9636-MONOMER"/>
<dbReference type="Proteomes" id="UP000000582">
    <property type="component" value="Chromosome"/>
</dbReference>
<dbReference type="Proteomes" id="UP000001009">
    <property type="component" value="Chromosome"/>
</dbReference>
<dbReference type="GO" id="GO:0005737">
    <property type="term" value="C:cytoplasm"/>
    <property type="evidence" value="ECO:0007669"/>
    <property type="project" value="UniProtKB-SubCell"/>
</dbReference>
<dbReference type="GO" id="GO:0016151">
    <property type="term" value="F:nickel cation binding"/>
    <property type="evidence" value="ECO:0007669"/>
    <property type="project" value="UniProtKB-UniRule"/>
</dbReference>
<dbReference type="GO" id="GO:0051082">
    <property type="term" value="F:unfolded protein binding"/>
    <property type="evidence" value="ECO:0007669"/>
    <property type="project" value="UniProtKB-UniRule"/>
</dbReference>
<dbReference type="GO" id="GO:0006457">
    <property type="term" value="P:protein folding"/>
    <property type="evidence" value="ECO:0007669"/>
    <property type="project" value="InterPro"/>
</dbReference>
<dbReference type="GO" id="GO:0065003">
    <property type="term" value="P:protein-containing complex assembly"/>
    <property type="evidence" value="ECO:0007669"/>
    <property type="project" value="InterPro"/>
</dbReference>
<dbReference type="GO" id="GO:0019627">
    <property type="term" value="P:urea metabolic process"/>
    <property type="evidence" value="ECO:0007669"/>
    <property type="project" value="InterPro"/>
</dbReference>
<dbReference type="CDD" id="cd00571">
    <property type="entry name" value="UreE"/>
    <property type="match status" value="1"/>
</dbReference>
<dbReference type="Gene3D" id="2.60.260.20">
    <property type="entry name" value="Urease metallochaperone UreE, N-terminal domain"/>
    <property type="match status" value="1"/>
</dbReference>
<dbReference type="Gene3D" id="3.30.70.790">
    <property type="entry name" value="UreE, C-terminal domain"/>
    <property type="match status" value="1"/>
</dbReference>
<dbReference type="HAMAP" id="MF_00822">
    <property type="entry name" value="UreE"/>
    <property type="match status" value="1"/>
</dbReference>
<dbReference type="InterPro" id="IPR012406">
    <property type="entry name" value="UreE"/>
</dbReference>
<dbReference type="InterPro" id="IPR007864">
    <property type="entry name" value="UreE_C_dom"/>
</dbReference>
<dbReference type="InterPro" id="IPR004029">
    <property type="entry name" value="UreE_N"/>
</dbReference>
<dbReference type="InterPro" id="IPR036118">
    <property type="entry name" value="UreE_N_sf"/>
</dbReference>
<dbReference type="NCBIfam" id="NF009757">
    <property type="entry name" value="PRK13261.2-3"/>
    <property type="match status" value="1"/>
</dbReference>
<dbReference type="Pfam" id="PF05194">
    <property type="entry name" value="UreE_C"/>
    <property type="match status" value="1"/>
</dbReference>
<dbReference type="Pfam" id="PF02814">
    <property type="entry name" value="UreE_N"/>
    <property type="match status" value="1"/>
</dbReference>
<dbReference type="PIRSF" id="PIRSF036402">
    <property type="entry name" value="Ureas_acces_UreE"/>
    <property type="match status" value="1"/>
</dbReference>
<dbReference type="SMART" id="SM00988">
    <property type="entry name" value="UreE_N"/>
    <property type="match status" value="1"/>
</dbReference>
<dbReference type="SUPFAM" id="SSF69737">
    <property type="entry name" value="Urease metallochaperone UreE, C-terminal domain"/>
    <property type="match status" value="1"/>
</dbReference>
<dbReference type="SUPFAM" id="SSF69287">
    <property type="entry name" value="Urease metallochaperone UreE, N-terminal domain"/>
    <property type="match status" value="1"/>
</dbReference>
<keyword id="KW-0143">Chaperone</keyword>
<keyword id="KW-0963">Cytoplasm</keyword>
<keyword id="KW-0533">Nickel</keyword>
<keyword id="KW-0996">Nickel insertion</keyword>
<keyword id="KW-1185">Reference proteome</keyword>
<protein>
    <recommendedName>
        <fullName evidence="1">Urease accessory protein UreE</fullName>
    </recommendedName>
</protein>